<comment type="function">
    <text evidence="1">Cleaves peptides in various proteins in a process that requires ATP hydrolysis. Has a chymotrypsin-like activity. Plays a major role in the degradation of misfolded proteins.</text>
</comment>
<comment type="catalytic activity">
    <reaction evidence="1">
        <text>Hydrolysis of proteins to small peptides in the presence of ATP and magnesium. alpha-casein is the usual test substrate. In the absence of ATP, only oligopeptides shorter than five residues are hydrolyzed (such as succinyl-Leu-Tyr-|-NHMec, and Leu-Tyr-Leu-|-Tyr-Trp, in which cleavage of the -Tyr-|-Leu- and -Tyr-|-Trp bonds also occurs).</text>
        <dbReference type="EC" id="3.4.21.92"/>
    </reaction>
</comment>
<comment type="subunit">
    <text evidence="1">Fourteen ClpP subunits assemble into 2 heptameric rings which stack back to back to give a disk-like structure with a central cavity, resembling the structure of eukaryotic proteasomes.</text>
</comment>
<comment type="subcellular location">
    <subcellularLocation>
        <location evidence="1">Cytoplasm</location>
    </subcellularLocation>
</comment>
<comment type="similarity">
    <text evidence="1">Belongs to the peptidase S14 family.</text>
</comment>
<proteinExistence type="inferred from homology"/>
<accession>B2KCS5</accession>
<evidence type="ECO:0000255" key="1">
    <source>
        <dbReference type="HAMAP-Rule" id="MF_00444"/>
    </source>
</evidence>
<name>CLPP_ELUMP</name>
<reference key="1">
    <citation type="journal article" date="2009" name="Appl. Environ. Microbiol.">
        <title>Genomic analysis of 'Elusimicrobium minutum,' the first cultivated representative of the phylum 'Elusimicrobia' (formerly termite group 1).</title>
        <authorList>
            <person name="Herlemann D.P.R."/>
            <person name="Geissinger O."/>
            <person name="Ikeda-Ohtsubo W."/>
            <person name="Kunin V."/>
            <person name="Sun H."/>
            <person name="Lapidus A."/>
            <person name="Hugenholtz P."/>
            <person name="Brune A."/>
        </authorList>
    </citation>
    <scope>NUCLEOTIDE SEQUENCE [LARGE SCALE GENOMIC DNA]</scope>
    <source>
        <strain>Pei191</strain>
    </source>
</reference>
<organism>
    <name type="scientific">Elusimicrobium minutum (strain Pei191)</name>
    <dbReference type="NCBI Taxonomy" id="445932"/>
    <lineage>
        <taxon>Bacteria</taxon>
        <taxon>Pseudomonadati</taxon>
        <taxon>Elusimicrobiota</taxon>
        <taxon>Elusimicrobia</taxon>
        <taxon>Elusimicrobiales</taxon>
        <taxon>Elusimicrobiaceae</taxon>
        <taxon>Elusimicrobium</taxon>
    </lineage>
</organism>
<keyword id="KW-0963">Cytoplasm</keyword>
<keyword id="KW-0378">Hydrolase</keyword>
<keyword id="KW-0645">Protease</keyword>
<keyword id="KW-1185">Reference proteome</keyword>
<keyword id="KW-0720">Serine protease</keyword>
<feature type="chain" id="PRO_1000206150" description="ATP-dependent Clp protease proteolytic subunit">
    <location>
        <begin position="1"/>
        <end position="195"/>
    </location>
</feature>
<feature type="active site" description="Nucleophile" evidence="1">
    <location>
        <position position="96"/>
    </location>
</feature>
<feature type="active site" evidence="1">
    <location>
        <position position="121"/>
    </location>
</feature>
<sequence>MIIPTIIEKNVGYDIFSRLLKDRIIFVGGREGEVDTASATMIIAQLLYLDAEDSEREINLYINSPGGLVTAGLAIYDTMQFIKAPITTICMGQAMSFGAVLLAAGSKGKRYALPHARIMIHQPLIWGGGISGQVTDIEIESNELRKNKEHLLDILAHHTGQDKEKIRQDSERNYYMSAQEAKAYGLIDEVLDLKK</sequence>
<dbReference type="EC" id="3.4.21.92" evidence="1"/>
<dbReference type="EMBL" id="CP001055">
    <property type="protein sequence ID" value="ACC98321.1"/>
    <property type="molecule type" value="Genomic_DNA"/>
</dbReference>
<dbReference type="RefSeq" id="WP_012414936.1">
    <property type="nucleotide sequence ID" value="NC_010644.1"/>
</dbReference>
<dbReference type="SMR" id="B2KCS5"/>
<dbReference type="STRING" id="445932.Emin_0766"/>
<dbReference type="MEROPS" id="S14.001"/>
<dbReference type="KEGG" id="emi:Emin_0766"/>
<dbReference type="HOGENOM" id="CLU_058707_3_2_0"/>
<dbReference type="OrthoDB" id="9802800at2"/>
<dbReference type="Proteomes" id="UP000001029">
    <property type="component" value="Chromosome"/>
</dbReference>
<dbReference type="GO" id="GO:0005737">
    <property type="term" value="C:cytoplasm"/>
    <property type="evidence" value="ECO:0007669"/>
    <property type="project" value="UniProtKB-SubCell"/>
</dbReference>
<dbReference type="GO" id="GO:0009368">
    <property type="term" value="C:endopeptidase Clp complex"/>
    <property type="evidence" value="ECO:0007669"/>
    <property type="project" value="TreeGrafter"/>
</dbReference>
<dbReference type="GO" id="GO:0004176">
    <property type="term" value="F:ATP-dependent peptidase activity"/>
    <property type="evidence" value="ECO:0007669"/>
    <property type="project" value="InterPro"/>
</dbReference>
<dbReference type="GO" id="GO:0051117">
    <property type="term" value="F:ATPase binding"/>
    <property type="evidence" value="ECO:0007669"/>
    <property type="project" value="TreeGrafter"/>
</dbReference>
<dbReference type="GO" id="GO:0004252">
    <property type="term" value="F:serine-type endopeptidase activity"/>
    <property type="evidence" value="ECO:0007669"/>
    <property type="project" value="UniProtKB-UniRule"/>
</dbReference>
<dbReference type="GO" id="GO:0006515">
    <property type="term" value="P:protein quality control for misfolded or incompletely synthesized proteins"/>
    <property type="evidence" value="ECO:0007669"/>
    <property type="project" value="TreeGrafter"/>
</dbReference>
<dbReference type="CDD" id="cd07017">
    <property type="entry name" value="S14_ClpP_2"/>
    <property type="match status" value="1"/>
</dbReference>
<dbReference type="FunFam" id="3.90.226.10:FF:000001">
    <property type="entry name" value="ATP-dependent Clp protease proteolytic subunit"/>
    <property type="match status" value="1"/>
</dbReference>
<dbReference type="Gene3D" id="3.90.226.10">
    <property type="entry name" value="2-enoyl-CoA Hydratase, Chain A, domain 1"/>
    <property type="match status" value="1"/>
</dbReference>
<dbReference type="HAMAP" id="MF_00444">
    <property type="entry name" value="ClpP"/>
    <property type="match status" value="1"/>
</dbReference>
<dbReference type="InterPro" id="IPR001907">
    <property type="entry name" value="ClpP"/>
</dbReference>
<dbReference type="InterPro" id="IPR029045">
    <property type="entry name" value="ClpP/crotonase-like_dom_sf"/>
</dbReference>
<dbReference type="InterPro" id="IPR023562">
    <property type="entry name" value="ClpP/TepA"/>
</dbReference>
<dbReference type="InterPro" id="IPR033135">
    <property type="entry name" value="ClpP_His_AS"/>
</dbReference>
<dbReference type="NCBIfam" id="NF001368">
    <property type="entry name" value="PRK00277.1"/>
    <property type="match status" value="1"/>
</dbReference>
<dbReference type="NCBIfam" id="NF009205">
    <property type="entry name" value="PRK12553.1"/>
    <property type="match status" value="1"/>
</dbReference>
<dbReference type="PANTHER" id="PTHR10381">
    <property type="entry name" value="ATP-DEPENDENT CLP PROTEASE PROTEOLYTIC SUBUNIT"/>
    <property type="match status" value="1"/>
</dbReference>
<dbReference type="PANTHER" id="PTHR10381:SF11">
    <property type="entry name" value="ATP-DEPENDENT CLP PROTEASE PROTEOLYTIC SUBUNIT, MITOCHONDRIAL"/>
    <property type="match status" value="1"/>
</dbReference>
<dbReference type="Pfam" id="PF00574">
    <property type="entry name" value="CLP_protease"/>
    <property type="match status" value="1"/>
</dbReference>
<dbReference type="PRINTS" id="PR00127">
    <property type="entry name" value="CLPPROTEASEP"/>
</dbReference>
<dbReference type="SUPFAM" id="SSF52096">
    <property type="entry name" value="ClpP/crotonase"/>
    <property type="match status" value="1"/>
</dbReference>
<dbReference type="PROSITE" id="PS00382">
    <property type="entry name" value="CLP_PROTEASE_HIS"/>
    <property type="match status" value="1"/>
</dbReference>
<gene>
    <name evidence="1" type="primary">clpP</name>
    <name type="ordered locus">Emin_0766</name>
</gene>
<protein>
    <recommendedName>
        <fullName evidence="1">ATP-dependent Clp protease proteolytic subunit</fullName>
        <ecNumber evidence="1">3.4.21.92</ecNumber>
    </recommendedName>
    <alternativeName>
        <fullName evidence="1">Endopeptidase Clp</fullName>
    </alternativeName>
</protein>